<reference key="1">
    <citation type="journal article" date="2005" name="Proc. Natl. Acad. Sci. U.S.A.">
        <title>The psychrophilic lifestyle as revealed by the genome sequence of Colwellia psychrerythraea 34H through genomic and proteomic analyses.</title>
        <authorList>
            <person name="Methe B.A."/>
            <person name="Nelson K.E."/>
            <person name="Deming J.W."/>
            <person name="Momen B."/>
            <person name="Melamud E."/>
            <person name="Zhang X."/>
            <person name="Moult J."/>
            <person name="Madupu R."/>
            <person name="Nelson W.C."/>
            <person name="Dodson R.J."/>
            <person name="Brinkac L.M."/>
            <person name="Daugherty S.C."/>
            <person name="Durkin A.S."/>
            <person name="DeBoy R.T."/>
            <person name="Kolonay J.F."/>
            <person name="Sullivan S.A."/>
            <person name="Zhou L."/>
            <person name="Davidsen T.M."/>
            <person name="Wu M."/>
            <person name="Huston A.L."/>
            <person name="Lewis M."/>
            <person name="Weaver B."/>
            <person name="Weidman J.F."/>
            <person name="Khouri H."/>
            <person name="Utterback T.R."/>
            <person name="Feldblyum T.V."/>
            <person name="Fraser C.M."/>
        </authorList>
    </citation>
    <scope>NUCLEOTIDE SEQUENCE [LARGE SCALE GENOMIC DNA]</scope>
    <source>
        <strain>34H / ATCC BAA-681</strain>
    </source>
</reference>
<organism>
    <name type="scientific">Colwellia psychrerythraea (strain 34H / ATCC BAA-681)</name>
    <name type="common">Vibrio psychroerythus</name>
    <dbReference type="NCBI Taxonomy" id="167879"/>
    <lineage>
        <taxon>Bacteria</taxon>
        <taxon>Pseudomonadati</taxon>
        <taxon>Pseudomonadota</taxon>
        <taxon>Gammaproteobacteria</taxon>
        <taxon>Alteromonadales</taxon>
        <taxon>Colwelliaceae</taxon>
        <taxon>Colwellia</taxon>
    </lineage>
</organism>
<accession>Q47VU0</accession>
<sequence length="196" mass="20922">MLEQIKNNFTESIQTQIAASELLGPSIEHAGMMMVQCLLGGNKIISCGNGGSAGHAQHFCAQLLNKYETERPSLPAISLNSDISTITSIANDYQYDEVFSKQIRALGHNGDVLLAISTSGNSRNVVKAIESAVSRDIPIIALTGFDGGDISGLLGEGDVEIRVPSARTSRIQEVHLVVLHSLCEIIDTTLFPQGDS</sequence>
<dbReference type="EC" id="5.3.1.28" evidence="1"/>
<dbReference type="EMBL" id="CP000083">
    <property type="protein sequence ID" value="AAZ28650.1"/>
    <property type="molecule type" value="Genomic_DNA"/>
</dbReference>
<dbReference type="RefSeq" id="WP_011045163.1">
    <property type="nucleotide sequence ID" value="NC_003910.7"/>
</dbReference>
<dbReference type="PDB" id="5BY2">
    <property type="method" value="X-ray"/>
    <property type="resolution" value="2.80 A"/>
    <property type="chains" value="A=1-196"/>
</dbReference>
<dbReference type="PDBsum" id="5BY2"/>
<dbReference type="SMR" id="Q47VU0"/>
<dbReference type="STRING" id="167879.CPS_4434"/>
<dbReference type="KEGG" id="cps:CPS_4434"/>
<dbReference type="eggNOG" id="COG0279">
    <property type="taxonomic scope" value="Bacteria"/>
</dbReference>
<dbReference type="HOGENOM" id="CLU_080999_3_1_6"/>
<dbReference type="UniPathway" id="UPA00041">
    <property type="reaction ID" value="UER00436"/>
</dbReference>
<dbReference type="EvolutionaryTrace" id="Q47VU0"/>
<dbReference type="Proteomes" id="UP000000547">
    <property type="component" value="Chromosome"/>
</dbReference>
<dbReference type="GO" id="GO:0005737">
    <property type="term" value="C:cytoplasm"/>
    <property type="evidence" value="ECO:0007669"/>
    <property type="project" value="UniProtKB-SubCell"/>
</dbReference>
<dbReference type="GO" id="GO:0097367">
    <property type="term" value="F:carbohydrate derivative binding"/>
    <property type="evidence" value="ECO:0007669"/>
    <property type="project" value="InterPro"/>
</dbReference>
<dbReference type="GO" id="GO:0008968">
    <property type="term" value="F:D-sedoheptulose 7-phosphate isomerase activity"/>
    <property type="evidence" value="ECO:0007669"/>
    <property type="project" value="UniProtKB-UniRule"/>
</dbReference>
<dbReference type="GO" id="GO:0008270">
    <property type="term" value="F:zinc ion binding"/>
    <property type="evidence" value="ECO:0007669"/>
    <property type="project" value="UniProtKB-UniRule"/>
</dbReference>
<dbReference type="GO" id="GO:0005975">
    <property type="term" value="P:carbohydrate metabolic process"/>
    <property type="evidence" value="ECO:0007669"/>
    <property type="project" value="UniProtKB-UniRule"/>
</dbReference>
<dbReference type="GO" id="GO:2001061">
    <property type="term" value="P:D-glycero-D-manno-heptose 7-phosphate biosynthetic process"/>
    <property type="evidence" value="ECO:0007669"/>
    <property type="project" value="UniProtKB-UniPathway"/>
</dbReference>
<dbReference type="CDD" id="cd05006">
    <property type="entry name" value="SIS_GmhA"/>
    <property type="match status" value="1"/>
</dbReference>
<dbReference type="Gene3D" id="3.40.50.10490">
    <property type="entry name" value="Glucose-6-phosphate isomerase like protein, domain 1"/>
    <property type="match status" value="1"/>
</dbReference>
<dbReference type="HAMAP" id="MF_00067">
    <property type="entry name" value="GmhA"/>
    <property type="match status" value="1"/>
</dbReference>
<dbReference type="InterPro" id="IPR035461">
    <property type="entry name" value="GmhA/DiaA"/>
</dbReference>
<dbReference type="InterPro" id="IPR004515">
    <property type="entry name" value="Phosphoheptose_Isoase"/>
</dbReference>
<dbReference type="InterPro" id="IPR001347">
    <property type="entry name" value="SIS_dom"/>
</dbReference>
<dbReference type="InterPro" id="IPR046348">
    <property type="entry name" value="SIS_dom_sf"/>
</dbReference>
<dbReference type="InterPro" id="IPR050099">
    <property type="entry name" value="SIS_GmhA/DiaA_subfam"/>
</dbReference>
<dbReference type="NCBIfam" id="NF010546">
    <property type="entry name" value="PRK13936.1"/>
    <property type="match status" value="1"/>
</dbReference>
<dbReference type="PANTHER" id="PTHR30390:SF6">
    <property type="entry name" value="DNAA INITIATOR-ASSOCIATING PROTEIN DIAA"/>
    <property type="match status" value="1"/>
</dbReference>
<dbReference type="PANTHER" id="PTHR30390">
    <property type="entry name" value="SEDOHEPTULOSE 7-PHOSPHATE ISOMERASE / DNAA INITIATOR-ASSOCIATING FACTOR FOR REPLICATION INITIATION"/>
    <property type="match status" value="1"/>
</dbReference>
<dbReference type="Pfam" id="PF13580">
    <property type="entry name" value="SIS_2"/>
    <property type="match status" value="1"/>
</dbReference>
<dbReference type="SUPFAM" id="SSF53697">
    <property type="entry name" value="SIS domain"/>
    <property type="match status" value="1"/>
</dbReference>
<dbReference type="PROSITE" id="PS51464">
    <property type="entry name" value="SIS"/>
    <property type="match status" value="1"/>
</dbReference>
<protein>
    <recommendedName>
        <fullName evidence="1">Phosphoheptose isomerase</fullName>
        <ecNumber evidence="1">5.3.1.28</ecNumber>
    </recommendedName>
    <alternativeName>
        <fullName evidence="1">Sedoheptulose 7-phosphate isomerase</fullName>
    </alternativeName>
</protein>
<name>GMHA_COLP3</name>
<feature type="chain" id="PRO_1000196994" description="Phosphoheptose isomerase">
    <location>
        <begin position="1"/>
        <end position="196"/>
    </location>
</feature>
<feature type="domain" description="SIS" evidence="1">
    <location>
        <begin position="34"/>
        <end position="192"/>
    </location>
</feature>
<feature type="binding site" evidence="1">
    <location>
        <begin position="49"/>
        <end position="51"/>
    </location>
    <ligand>
        <name>substrate</name>
    </ligand>
</feature>
<feature type="binding site" evidence="1">
    <location>
        <position position="58"/>
    </location>
    <ligand>
        <name>Zn(2+)</name>
        <dbReference type="ChEBI" id="CHEBI:29105"/>
    </ligand>
</feature>
<feature type="binding site" evidence="1">
    <location>
        <position position="62"/>
    </location>
    <ligand>
        <name>substrate</name>
    </ligand>
</feature>
<feature type="binding site" evidence="1">
    <location>
        <position position="62"/>
    </location>
    <ligand>
        <name>Zn(2+)</name>
        <dbReference type="ChEBI" id="CHEBI:29105"/>
    </ligand>
</feature>
<feature type="binding site" evidence="1">
    <location>
        <begin position="91"/>
        <end position="92"/>
    </location>
    <ligand>
        <name>substrate</name>
    </ligand>
</feature>
<feature type="binding site" evidence="1">
    <location>
        <begin position="117"/>
        <end position="119"/>
    </location>
    <ligand>
        <name>substrate</name>
    </ligand>
</feature>
<feature type="binding site" evidence="1">
    <location>
        <position position="122"/>
    </location>
    <ligand>
        <name>substrate</name>
    </ligand>
</feature>
<feature type="binding site" evidence="1">
    <location>
        <position position="172"/>
    </location>
    <ligand>
        <name>substrate</name>
    </ligand>
</feature>
<feature type="binding site" evidence="1">
    <location>
        <position position="172"/>
    </location>
    <ligand>
        <name>Zn(2+)</name>
        <dbReference type="ChEBI" id="CHEBI:29105"/>
    </ligand>
</feature>
<feature type="binding site" evidence="1">
    <location>
        <position position="180"/>
    </location>
    <ligand>
        <name>Zn(2+)</name>
        <dbReference type="ChEBI" id="CHEBI:29105"/>
    </ligand>
</feature>
<feature type="helix" evidence="2">
    <location>
        <begin position="1"/>
        <end position="22"/>
    </location>
</feature>
<feature type="helix" evidence="2">
    <location>
        <begin position="24"/>
        <end position="39"/>
    </location>
</feature>
<feature type="strand" evidence="2">
    <location>
        <begin position="44"/>
        <end position="47"/>
    </location>
</feature>
<feature type="helix" evidence="2">
    <location>
        <begin position="52"/>
        <end position="63"/>
    </location>
</feature>
<feature type="strand" evidence="2">
    <location>
        <begin position="67"/>
        <end position="69"/>
    </location>
</feature>
<feature type="strand" evidence="2">
    <location>
        <begin position="76"/>
        <end position="81"/>
    </location>
</feature>
<feature type="helix" evidence="2">
    <location>
        <begin position="83"/>
        <end position="89"/>
    </location>
</feature>
<feature type="helix" evidence="2">
    <location>
        <begin position="90"/>
        <end position="94"/>
    </location>
</feature>
<feature type="helix" evidence="2">
    <location>
        <begin position="95"/>
        <end position="97"/>
    </location>
</feature>
<feature type="helix" evidence="2">
    <location>
        <begin position="100"/>
        <end position="106"/>
    </location>
</feature>
<feature type="strand" evidence="2">
    <location>
        <begin position="112"/>
        <end position="116"/>
    </location>
</feature>
<feature type="strand" evidence="2">
    <location>
        <begin position="118"/>
        <end position="120"/>
    </location>
</feature>
<feature type="helix" evidence="2">
    <location>
        <begin position="123"/>
        <end position="133"/>
    </location>
</feature>
<feature type="turn" evidence="2">
    <location>
        <begin position="134"/>
        <end position="136"/>
    </location>
</feature>
<feature type="strand" evidence="2">
    <location>
        <begin position="139"/>
        <end position="144"/>
    </location>
</feature>
<feature type="helix" evidence="2">
    <location>
        <begin position="148"/>
        <end position="153"/>
    </location>
</feature>
<feature type="strand" evidence="2">
    <location>
        <begin position="156"/>
        <end position="164"/>
    </location>
</feature>
<feature type="helix" evidence="2">
    <location>
        <begin position="168"/>
        <end position="190"/>
    </location>
</feature>
<keyword id="KW-0002">3D-structure</keyword>
<keyword id="KW-0119">Carbohydrate metabolism</keyword>
<keyword id="KW-0963">Cytoplasm</keyword>
<keyword id="KW-0413">Isomerase</keyword>
<keyword id="KW-0479">Metal-binding</keyword>
<keyword id="KW-0862">Zinc</keyword>
<comment type="function">
    <text evidence="1">Catalyzes the isomerization of sedoheptulose 7-phosphate in D-glycero-D-manno-heptose 7-phosphate.</text>
</comment>
<comment type="catalytic activity">
    <reaction evidence="1">
        <text>2 D-sedoheptulose 7-phosphate = D-glycero-alpha-D-manno-heptose 7-phosphate + D-glycero-beta-D-manno-heptose 7-phosphate</text>
        <dbReference type="Rhea" id="RHEA:27489"/>
        <dbReference type="ChEBI" id="CHEBI:57483"/>
        <dbReference type="ChEBI" id="CHEBI:60203"/>
        <dbReference type="ChEBI" id="CHEBI:60204"/>
        <dbReference type="EC" id="5.3.1.28"/>
    </reaction>
</comment>
<comment type="cofactor">
    <cofactor evidence="1">
        <name>Zn(2+)</name>
        <dbReference type="ChEBI" id="CHEBI:29105"/>
    </cofactor>
    <text evidence="1">Binds 1 zinc ion per subunit.</text>
</comment>
<comment type="pathway">
    <text evidence="1">Carbohydrate biosynthesis; D-glycero-D-manno-heptose 7-phosphate biosynthesis; D-glycero-alpha-D-manno-heptose 7-phosphate and D-glycero-beta-D-manno-heptose 7-phosphate from sedoheptulose 7-phosphate: step 1/1.</text>
</comment>
<comment type="subunit">
    <text evidence="1">Homotetramer.</text>
</comment>
<comment type="subcellular location">
    <subcellularLocation>
        <location evidence="1">Cytoplasm</location>
    </subcellularLocation>
</comment>
<comment type="miscellaneous">
    <text evidence="1">The reaction produces a racemic mixture of D-glycero-alpha-D-manno-heptose 7-phosphate and D-glycero-beta-D-manno-heptose 7-phosphate.</text>
</comment>
<comment type="similarity">
    <text evidence="1">Belongs to the SIS family. GmhA subfamily.</text>
</comment>
<gene>
    <name evidence="1" type="primary">gmhA</name>
    <name type="ordered locus">CPS_4434</name>
</gene>
<proteinExistence type="evidence at protein level"/>
<evidence type="ECO:0000255" key="1">
    <source>
        <dbReference type="HAMAP-Rule" id="MF_00067"/>
    </source>
</evidence>
<evidence type="ECO:0007829" key="2">
    <source>
        <dbReference type="PDB" id="5BY2"/>
    </source>
</evidence>